<sequence>MNKPICSTGLRWLWLAVVVVILDISSKQWVMAHFALYESVPLIPFFNLTYAQNFGAAFSFLADKSGWQRWFFAGIAIGISVVLMVMMYRSTAKQRLINCAYALIIGGALGNLYDRLVHGAVNDFLDFYINNWHFPTFNLADVAICIGAALVIFEGFLSPVEKNAVNNDE</sequence>
<accession>Q1CMV0</accession>
<accession>C4GNQ1</accession>
<reference key="1">
    <citation type="journal article" date="2006" name="J. Bacteriol.">
        <title>Complete genome sequence of Yersinia pestis strains Antiqua and Nepal516: evidence of gene reduction in an emerging pathogen.</title>
        <authorList>
            <person name="Chain P.S.G."/>
            <person name="Hu P."/>
            <person name="Malfatti S.A."/>
            <person name="Radnedge L."/>
            <person name="Larimer F."/>
            <person name="Vergez L.M."/>
            <person name="Worsham P."/>
            <person name="Chu M.C."/>
            <person name="Andersen G.L."/>
        </authorList>
    </citation>
    <scope>NUCLEOTIDE SEQUENCE [LARGE SCALE GENOMIC DNA]</scope>
    <source>
        <strain>Nepal516</strain>
    </source>
</reference>
<reference key="2">
    <citation type="submission" date="2009-04" db="EMBL/GenBank/DDBJ databases">
        <title>Yersinia pestis Nepal516A whole genome shotgun sequencing project.</title>
        <authorList>
            <person name="Plunkett G. III"/>
            <person name="Anderson B.D."/>
            <person name="Baumler D.J."/>
            <person name="Burland V."/>
            <person name="Cabot E.L."/>
            <person name="Glasner J.D."/>
            <person name="Mau B."/>
            <person name="Neeno-Eckwall E."/>
            <person name="Perna N.T."/>
            <person name="Munk A.C."/>
            <person name="Tapia R."/>
            <person name="Green L.D."/>
            <person name="Rogers Y.C."/>
            <person name="Detter J.C."/>
            <person name="Bruce D.C."/>
            <person name="Brettin T.S."/>
        </authorList>
    </citation>
    <scope>NUCLEOTIDE SEQUENCE [LARGE SCALE GENOMIC DNA]</scope>
    <source>
        <strain>Nepal516</strain>
    </source>
</reference>
<gene>
    <name evidence="1" type="primary">lspA</name>
    <name type="ordered locus">YPN_0348</name>
    <name type="ORF">YP516_0355</name>
</gene>
<keyword id="KW-0064">Aspartyl protease</keyword>
<keyword id="KW-0997">Cell inner membrane</keyword>
<keyword id="KW-1003">Cell membrane</keyword>
<keyword id="KW-0378">Hydrolase</keyword>
<keyword id="KW-0472">Membrane</keyword>
<keyword id="KW-0645">Protease</keyword>
<keyword id="KW-0812">Transmembrane</keyword>
<keyword id="KW-1133">Transmembrane helix</keyword>
<name>LSPA_YERPN</name>
<feature type="chain" id="PRO_0000289466" description="Lipoprotein signal peptidase">
    <location>
        <begin position="1"/>
        <end position="169"/>
    </location>
</feature>
<feature type="transmembrane region" description="Helical" evidence="1">
    <location>
        <begin position="4"/>
        <end position="24"/>
    </location>
</feature>
<feature type="transmembrane region" description="Helical" evidence="1">
    <location>
        <begin position="29"/>
        <end position="49"/>
    </location>
</feature>
<feature type="transmembrane region" description="Helical" evidence="1">
    <location>
        <begin position="70"/>
        <end position="90"/>
    </location>
</feature>
<feature type="transmembrane region" description="Helical" evidence="1">
    <location>
        <begin position="101"/>
        <end position="121"/>
    </location>
</feature>
<feature type="transmembrane region" description="Helical" evidence="1">
    <location>
        <begin position="137"/>
        <end position="157"/>
    </location>
</feature>
<feature type="active site" evidence="1">
    <location>
        <position position="123"/>
    </location>
</feature>
<feature type="active site" evidence="1">
    <location>
        <position position="141"/>
    </location>
</feature>
<comment type="function">
    <text evidence="1">This protein specifically catalyzes the removal of signal peptides from prolipoproteins.</text>
</comment>
<comment type="catalytic activity">
    <reaction evidence="1">
        <text>Release of signal peptides from bacterial membrane prolipoproteins. Hydrolyzes -Xaa-Yaa-Zaa-|-(S,diacylglyceryl)Cys-, in which Xaa is hydrophobic (preferably Leu), and Yaa (Ala or Ser) and Zaa (Gly or Ala) have small, neutral side chains.</text>
        <dbReference type="EC" id="3.4.23.36"/>
    </reaction>
</comment>
<comment type="pathway">
    <text evidence="1">Protein modification; lipoprotein biosynthesis (signal peptide cleavage).</text>
</comment>
<comment type="subcellular location">
    <subcellularLocation>
        <location evidence="1">Cell inner membrane</location>
        <topology evidence="1">Multi-pass membrane protein</topology>
    </subcellularLocation>
</comment>
<comment type="similarity">
    <text evidence="1">Belongs to the peptidase A8 family.</text>
</comment>
<proteinExistence type="inferred from homology"/>
<organism>
    <name type="scientific">Yersinia pestis bv. Antiqua (strain Nepal516)</name>
    <dbReference type="NCBI Taxonomy" id="377628"/>
    <lineage>
        <taxon>Bacteria</taxon>
        <taxon>Pseudomonadati</taxon>
        <taxon>Pseudomonadota</taxon>
        <taxon>Gammaproteobacteria</taxon>
        <taxon>Enterobacterales</taxon>
        <taxon>Yersiniaceae</taxon>
        <taxon>Yersinia</taxon>
    </lineage>
</organism>
<evidence type="ECO:0000255" key="1">
    <source>
        <dbReference type="HAMAP-Rule" id="MF_00161"/>
    </source>
</evidence>
<dbReference type="EC" id="3.4.23.36" evidence="1"/>
<dbReference type="EMBL" id="CP000305">
    <property type="protein sequence ID" value="ABG16680.1"/>
    <property type="molecule type" value="Genomic_DNA"/>
</dbReference>
<dbReference type="EMBL" id="ACNQ01000006">
    <property type="protein sequence ID" value="EEO78133.1"/>
    <property type="molecule type" value="Genomic_DNA"/>
</dbReference>
<dbReference type="RefSeq" id="WP_002210508.1">
    <property type="nucleotide sequence ID" value="NZ_ACNQ01000006.1"/>
</dbReference>
<dbReference type="SMR" id="Q1CMV0"/>
<dbReference type="MEROPS" id="A08.001"/>
<dbReference type="GeneID" id="57974134"/>
<dbReference type="KEGG" id="ypn:YPN_0348"/>
<dbReference type="HOGENOM" id="CLU_083252_4_0_6"/>
<dbReference type="UniPathway" id="UPA00665"/>
<dbReference type="Proteomes" id="UP000008936">
    <property type="component" value="Chromosome"/>
</dbReference>
<dbReference type="GO" id="GO:0005886">
    <property type="term" value="C:plasma membrane"/>
    <property type="evidence" value="ECO:0007669"/>
    <property type="project" value="UniProtKB-SubCell"/>
</dbReference>
<dbReference type="GO" id="GO:0004190">
    <property type="term" value="F:aspartic-type endopeptidase activity"/>
    <property type="evidence" value="ECO:0007669"/>
    <property type="project" value="UniProtKB-UniRule"/>
</dbReference>
<dbReference type="GO" id="GO:0006508">
    <property type="term" value="P:proteolysis"/>
    <property type="evidence" value="ECO:0007669"/>
    <property type="project" value="UniProtKB-KW"/>
</dbReference>
<dbReference type="HAMAP" id="MF_00161">
    <property type="entry name" value="LspA"/>
    <property type="match status" value="1"/>
</dbReference>
<dbReference type="InterPro" id="IPR001872">
    <property type="entry name" value="Peptidase_A8"/>
</dbReference>
<dbReference type="NCBIfam" id="TIGR00077">
    <property type="entry name" value="lspA"/>
    <property type="match status" value="1"/>
</dbReference>
<dbReference type="PANTHER" id="PTHR33695">
    <property type="entry name" value="LIPOPROTEIN SIGNAL PEPTIDASE"/>
    <property type="match status" value="1"/>
</dbReference>
<dbReference type="PANTHER" id="PTHR33695:SF1">
    <property type="entry name" value="LIPOPROTEIN SIGNAL PEPTIDASE"/>
    <property type="match status" value="1"/>
</dbReference>
<dbReference type="Pfam" id="PF01252">
    <property type="entry name" value="Peptidase_A8"/>
    <property type="match status" value="1"/>
</dbReference>
<dbReference type="PRINTS" id="PR00781">
    <property type="entry name" value="LIPOSIGPTASE"/>
</dbReference>
<dbReference type="PROSITE" id="PS00855">
    <property type="entry name" value="SPASE_II"/>
    <property type="match status" value="1"/>
</dbReference>
<protein>
    <recommendedName>
        <fullName evidence="1">Lipoprotein signal peptidase</fullName>
        <ecNumber evidence="1">3.4.23.36</ecNumber>
    </recommendedName>
    <alternativeName>
        <fullName evidence="1">Prolipoprotein signal peptidase</fullName>
    </alternativeName>
    <alternativeName>
        <fullName evidence="1">Signal peptidase II</fullName>
        <shortName evidence="1">SPase II</shortName>
    </alternativeName>
</protein>